<accession>A2VDZ4</accession>
<comment type="function">
    <text evidence="2 3">Serine/threonine-protein kinase that plays a central role in centriole duplication. Able to trigger procentriole formation on the surface of the parental centriole cylinder, leading to the recruitment of centriole biogenesis proteins such as SASS6, CPAP, CCP110, CEP135 and gamma-tubulin. When overexpressed, it is able to induce centrosome amplification through the simultaneous generation of multiple procentrioles adjoining each parental centriole during S phase. Phosphorylates 'Ser-151' of FBXW5 during the G1/S transition, leading to inhibit FBXW5 ability to ubiquitinate SASS6. Its central role in centriole replication suggests a possible role in tumorigenesis, centrosome aberrations being frequently observed in tumors. Also involved in deuterosome-mediated centriole amplification in multiciliated that can generate more than 100 centrioles. Also involved in trophoblast differentiation by phosphorylating HAND1, leading to disrupt the interaction between HAND1 and MDFIC and activate HAND1. Phosphorylates CDC25C and CHEK2. Required for the recruitment of STIL to the centriole and for STIL-mediated centriole amplification (By similarity). Phosphorylates CEP131 and PCM1 which is essential for proper organization and integrity of centriolar satellites (By similarity).</text>
</comment>
<comment type="catalytic activity">
    <reaction evidence="2">
        <text>L-seryl-[protein] + ATP = O-phospho-L-seryl-[protein] + ADP + H(+)</text>
        <dbReference type="Rhea" id="RHEA:17989"/>
        <dbReference type="Rhea" id="RHEA-COMP:9863"/>
        <dbReference type="Rhea" id="RHEA-COMP:11604"/>
        <dbReference type="ChEBI" id="CHEBI:15378"/>
        <dbReference type="ChEBI" id="CHEBI:29999"/>
        <dbReference type="ChEBI" id="CHEBI:30616"/>
        <dbReference type="ChEBI" id="CHEBI:83421"/>
        <dbReference type="ChEBI" id="CHEBI:456216"/>
        <dbReference type="EC" id="2.7.11.21"/>
    </reaction>
</comment>
<comment type="catalytic activity">
    <reaction evidence="2">
        <text>L-threonyl-[protein] + ATP = O-phospho-L-threonyl-[protein] + ADP + H(+)</text>
        <dbReference type="Rhea" id="RHEA:46608"/>
        <dbReference type="Rhea" id="RHEA-COMP:11060"/>
        <dbReference type="Rhea" id="RHEA-COMP:11605"/>
        <dbReference type="ChEBI" id="CHEBI:15378"/>
        <dbReference type="ChEBI" id="CHEBI:30013"/>
        <dbReference type="ChEBI" id="CHEBI:30616"/>
        <dbReference type="ChEBI" id="CHEBI:61977"/>
        <dbReference type="ChEBI" id="CHEBI:456216"/>
        <dbReference type="EC" id="2.7.11.21"/>
    </reaction>
</comment>
<comment type="subunit">
    <text evidence="2 3">Homodimer (By similarity). Interacts with CEP152 (via N-terminus). Interacts with CEP78; this interaction may be important for proper PLK4 localization to the centriole and PLK4-induced overduplication of centrioles. Interacts with CEP131. Interacts simultaneously with TENT5C and CEP192. Interacts with TENT5C; this interaction leads to the TENT5C recruitment in the centrosome (By similarity). Interacts with CEP85; this interaction may be important in cell migration and centriole assembly (By similarity).</text>
</comment>
<comment type="subcellular location">
    <subcellularLocation>
        <location evidence="2">Cytoplasm</location>
        <location evidence="2">Cytoskeleton</location>
        <location evidence="2">Microtubule organizing center</location>
        <location evidence="2">Centrosome</location>
        <location evidence="2">Centriole</location>
    </subcellularLocation>
    <subcellularLocation>
        <location evidence="3">Nucleus</location>
        <location evidence="3">Nucleolus</location>
    </subcellularLocation>
    <subcellularLocation>
        <location evidence="3">Cleavage furrow</location>
    </subcellularLocation>
    <subcellularLocation>
        <location evidence="2">Cytoplasm</location>
        <location evidence="2">Cytoskeleton</location>
        <location evidence="2">Microtubule organizing center</location>
        <location evidence="2">Centrosome</location>
    </subcellularLocation>
    <text evidence="2 3">Associates with centrioles throughout the cell cycle. Component of the deuterosome, a structure that promotes de novo centriole amplification in multiciliated cells that can generate more than 100 centrioles (By similarity).</text>
</comment>
<comment type="domain">
    <text evidence="2">Cryptic POLO box 1 (CPB1) and Cryptic POLO box 2 (CPB2) domains can simultaneously bind to both TENT5C and CEP192.</text>
</comment>
<comment type="PTM">
    <text evidence="1">Ubiquitinated; leading to its degradation by the proteasome.</text>
</comment>
<comment type="PTM">
    <text evidence="1">Tyrosine-phosphorylated by TEC.</text>
</comment>
<comment type="PTM">
    <text evidence="2">Acetylation by KAT2A and KAT2B impairs kinase activity by shifting the kinase to an inactive conformation.</text>
</comment>
<comment type="similarity">
    <text evidence="5 6 7">Belongs to the protein kinase superfamily. Ser/Thr protein kinase family. CDC5/Polo subfamily.</text>
</comment>
<name>PLK4_BOVIN</name>
<dbReference type="EC" id="2.7.11.21" evidence="2"/>
<dbReference type="EMBL" id="BC133488">
    <property type="protein sequence ID" value="AAI33489.1"/>
    <property type="molecule type" value="mRNA"/>
</dbReference>
<dbReference type="RefSeq" id="NP_001076896.1">
    <property type="nucleotide sequence ID" value="NM_001083427.2"/>
</dbReference>
<dbReference type="SMR" id="A2VDZ4"/>
<dbReference type="FunCoup" id="A2VDZ4">
    <property type="interactions" value="1469"/>
</dbReference>
<dbReference type="STRING" id="9913.ENSBTAP00000048808"/>
<dbReference type="PaxDb" id="9913-ENSBTAP00000048808"/>
<dbReference type="Ensembl" id="ENSBTAT00000055868.2">
    <property type="protein sequence ID" value="ENSBTAP00000048808.1"/>
    <property type="gene ID" value="ENSBTAG00000039552.4"/>
</dbReference>
<dbReference type="GeneID" id="514405"/>
<dbReference type="KEGG" id="bta:514405"/>
<dbReference type="CTD" id="10733"/>
<dbReference type="VEuPathDB" id="HostDB:ENSBTAG00000039552"/>
<dbReference type="VGNC" id="VGNC:33036">
    <property type="gene designation" value="PLK4"/>
</dbReference>
<dbReference type="eggNOG" id="KOG0575">
    <property type="taxonomic scope" value="Eukaryota"/>
</dbReference>
<dbReference type="GeneTree" id="ENSGT00940000156316"/>
<dbReference type="HOGENOM" id="CLU_008726_1_0_1"/>
<dbReference type="InParanoid" id="A2VDZ4"/>
<dbReference type="OMA" id="NIVERCH"/>
<dbReference type="OrthoDB" id="10004143at2759"/>
<dbReference type="TreeFam" id="TF101090"/>
<dbReference type="Reactome" id="R-BTA-2565942">
    <property type="pathway name" value="Regulation of PLK1 Activity at G2/M Transition"/>
</dbReference>
<dbReference type="Reactome" id="R-BTA-380259">
    <property type="pathway name" value="Loss of Nlp from mitotic centrosomes"/>
</dbReference>
<dbReference type="Reactome" id="R-BTA-380270">
    <property type="pathway name" value="Recruitment of mitotic centrosome proteins and complexes"/>
</dbReference>
<dbReference type="Reactome" id="R-BTA-380284">
    <property type="pathway name" value="Loss of proteins required for interphase microtubule organization from the centrosome"/>
</dbReference>
<dbReference type="Reactome" id="R-BTA-380320">
    <property type="pathway name" value="Recruitment of NuMA to mitotic centrosomes"/>
</dbReference>
<dbReference type="Reactome" id="R-BTA-5620912">
    <property type="pathway name" value="Anchoring of the basal body to the plasma membrane"/>
</dbReference>
<dbReference type="Reactome" id="R-BTA-8854518">
    <property type="pathway name" value="AURKA Activation by TPX2"/>
</dbReference>
<dbReference type="Proteomes" id="UP000009136">
    <property type="component" value="Chromosome 17"/>
</dbReference>
<dbReference type="Bgee" id="ENSBTAG00000039552">
    <property type="expression patterns" value="Expressed in spermatid and 107 other cell types or tissues"/>
</dbReference>
<dbReference type="GO" id="GO:0005814">
    <property type="term" value="C:centriole"/>
    <property type="evidence" value="ECO:0000250"/>
    <property type="project" value="UniProtKB"/>
</dbReference>
<dbReference type="GO" id="GO:0005813">
    <property type="term" value="C:centrosome"/>
    <property type="evidence" value="ECO:0000250"/>
    <property type="project" value="UniProtKB"/>
</dbReference>
<dbReference type="GO" id="GO:0032154">
    <property type="term" value="C:cleavage furrow"/>
    <property type="evidence" value="ECO:0007669"/>
    <property type="project" value="UniProtKB-SubCell"/>
</dbReference>
<dbReference type="GO" id="GO:0005737">
    <property type="term" value="C:cytoplasm"/>
    <property type="evidence" value="ECO:0007669"/>
    <property type="project" value="UniProtKB-KW"/>
</dbReference>
<dbReference type="GO" id="GO:0098536">
    <property type="term" value="C:deuterosome"/>
    <property type="evidence" value="ECO:0000250"/>
    <property type="project" value="UniProtKB"/>
</dbReference>
<dbReference type="GO" id="GO:0005730">
    <property type="term" value="C:nucleolus"/>
    <property type="evidence" value="ECO:0000250"/>
    <property type="project" value="UniProtKB"/>
</dbReference>
<dbReference type="GO" id="GO:0005634">
    <property type="term" value="C:nucleus"/>
    <property type="evidence" value="ECO:0000318"/>
    <property type="project" value="GO_Central"/>
</dbReference>
<dbReference type="GO" id="GO:0005524">
    <property type="term" value="F:ATP binding"/>
    <property type="evidence" value="ECO:0007669"/>
    <property type="project" value="UniProtKB-KW"/>
</dbReference>
<dbReference type="GO" id="GO:0106310">
    <property type="term" value="F:protein serine kinase activity"/>
    <property type="evidence" value="ECO:0007669"/>
    <property type="project" value="RHEA"/>
</dbReference>
<dbReference type="GO" id="GO:0004674">
    <property type="term" value="F:protein serine/threonine kinase activity"/>
    <property type="evidence" value="ECO:0000250"/>
    <property type="project" value="UniProtKB"/>
</dbReference>
<dbReference type="GO" id="GO:0007099">
    <property type="term" value="P:centriole replication"/>
    <property type="evidence" value="ECO:0000250"/>
    <property type="project" value="UniProtKB"/>
</dbReference>
<dbReference type="GO" id="GO:0060271">
    <property type="term" value="P:cilium assembly"/>
    <property type="evidence" value="ECO:0000250"/>
    <property type="project" value="UniProtKB"/>
</dbReference>
<dbReference type="GO" id="GO:0098535">
    <property type="term" value="P:de novo centriole assembly involved in multi-ciliated epithelial cell differentiation"/>
    <property type="evidence" value="ECO:0000250"/>
    <property type="project" value="UniProtKB"/>
</dbReference>
<dbReference type="GO" id="GO:0046601">
    <property type="term" value="P:positive regulation of centriole replication"/>
    <property type="evidence" value="ECO:0000250"/>
    <property type="project" value="UniProtKB"/>
</dbReference>
<dbReference type="GO" id="GO:0006468">
    <property type="term" value="P:protein phosphorylation"/>
    <property type="evidence" value="ECO:0000250"/>
    <property type="project" value="UniProtKB"/>
</dbReference>
<dbReference type="GO" id="GO:0060707">
    <property type="term" value="P:trophoblast giant cell differentiation"/>
    <property type="evidence" value="ECO:0000250"/>
    <property type="project" value="UniProtKB"/>
</dbReference>
<dbReference type="CDD" id="cd13114">
    <property type="entry name" value="POLO_box_Plk4_1"/>
    <property type="match status" value="1"/>
</dbReference>
<dbReference type="CDD" id="cd13115">
    <property type="entry name" value="POLO_box_Plk4_2"/>
    <property type="match status" value="1"/>
</dbReference>
<dbReference type="CDD" id="cd13116">
    <property type="entry name" value="POLO_box_Plk4_3"/>
    <property type="match status" value="1"/>
</dbReference>
<dbReference type="CDD" id="cd14186">
    <property type="entry name" value="STKc_PLK4"/>
    <property type="match status" value="1"/>
</dbReference>
<dbReference type="FunFam" id="3.30.200.20:FF:000221">
    <property type="entry name" value="Putative serine/threonine-protein kinase PLK4"/>
    <property type="match status" value="1"/>
</dbReference>
<dbReference type="FunFam" id="1.10.510.10:FF:000576">
    <property type="entry name" value="Serine/threonine-protein kinase PLK4"/>
    <property type="match status" value="1"/>
</dbReference>
<dbReference type="FunFam" id="2.40.50.930:FF:000001">
    <property type="entry name" value="Serine/threonine-protein kinase PLK4"/>
    <property type="match status" value="1"/>
</dbReference>
<dbReference type="FunFam" id="3.30.1120.130:FF:000001">
    <property type="entry name" value="serine/threonine-protein kinase PLK4 isoform X1"/>
    <property type="match status" value="1"/>
</dbReference>
<dbReference type="FunFam" id="3.30.1120.120:FF:000001">
    <property type="entry name" value="serine/threonine-protein kinase PLK4 isoform X2"/>
    <property type="match status" value="1"/>
</dbReference>
<dbReference type="Gene3D" id="2.40.50.930">
    <property type="match status" value="1"/>
</dbReference>
<dbReference type="Gene3D" id="3.30.1120.120">
    <property type="match status" value="1"/>
</dbReference>
<dbReference type="Gene3D" id="3.30.1120.130">
    <property type="match status" value="1"/>
</dbReference>
<dbReference type="Gene3D" id="3.30.200.20">
    <property type="entry name" value="Phosphorylase Kinase, domain 1"/>
    <property type="match status" value="1"/>
</dbReference>
<dbReference type="Gene3D" id="1.10.510.10">
    <property type="entry name" value="Transferase(Phosphotransferase) domain 1"/>
    <property type="match status" value="1"/>
</dbReference>
<dbReference type="InterPro" id="IPR011009">
    <property type="entry name" value="Kinase-like_dom_sf"/>
</dbReference>
<dbReference type="InterPro" id="IPR047108">
    <property type="entry name" value="Plk4-like_POLO_box_2_sf"/>
</dbReference>
<dbReference type="InterPro" id="IPR000959">
    <property type="entry name" value="POLO_box_dom"/>
</dbReference>
<dbReference type="InterPro" id="IPR033699">
    <property type="entry name" value="POLO_box_Plk4_1"/>
</dbReference>
<dbReference type="InterPro" id="IPR033698">
    <property type="entry name" value="POLO_box_Plk4_2"/>
</dbReference>
<dbReference type="InterPro" id="IPR033696">
    <property type="entry name" value="POLO_box_Plk4_C"/>
</dbReference>
<dbReference type="InterPro" id="IPR000719">
    <property type="entry name" value="Prot_kinase_dom"/>
</dbReference>
<dbReference type="InterPro" id="IPR017441">
    <property type="entry name" value="Protein_kinase_ATP_BS"/>
</dbReference>
<dbReference type="InterPro" id="IPR046437">
    <property type="entry name" value="Ser_Thr-PK_POLO_box_1_sf"/>
</dbReference>
<dbReference type="InterPro" id="IPR008266">
    <property type="entry name" value="Tyr_kinase_AS"/>
</dbReference>
<dbReference type="PANTHER" id="PTHR24345">
    <property type="entry name" value="SERINE/THREONINE-PROTEIN KINASE PLK"/>
    <property type="match status" value="1"/>
</dbReference>
<dbReference type="PANTHER" id="PTHR24345:SF89">
    <property type="entry name" value="SERINE_THREONINE-PROTEIN KINASE PLK4"/>
    <property type="match status" value="1"/>
</dbReference>
<dbReference type="Pfam" id="PF00069">
    <property type="entry name" value="Pkinase"/>
    <property type="match status" value="1"/>
</dbReference>
<dbReference type="Pfam" id="PF18190">
    <property type="entry name" value="Plk4_PB1"/>
    <property type="match status" value="1"/>
</dbReference>
<dbReference type="Pfam" id="PF18409">
    <property type="entry name" value="Plk4_PB2"/>
    <property type="match status" value="1"/>
</dbReference>
<dbReference type="SUPFAM" id="SSF82615">
    <property type="entry name" value="Polo-box domain"/>
    <property type="match status" value="1"/>
</dbReference>
<dbReference type="SUPFAM" id="SSF56112">
    <property type="entry name" value="Protein kinase-like (PK-like)"/>
    <property type="match status" value="1"/>
</dbReference>
<dbReference type="PROSITE" id="PS51984">
    <property type="entry name" value="CPB1"/>
    <property type="match status" value="1"/>
</dbReference>
<dbReference type="PROSITE" id="PS51985">
    <property type="entry name" value="CPB2"/>
    <property type="match status" value="1"/>
</dbReference>
<dbReference type="PROSITE" id="PS50078">
    <property type="entry name" value="POLO_BOX"/>
    <property type="match status" value="1"/>
</dbReference>
<dbReference type="PROSITE" id="PS00107">
    <property type="entry name" value="PROTEIN_KINASE_ATP"/>
    <property type="match status" value="1"/>
</dbReference>
<dbReference type="PROSITE" id="PS50011">
    <property type="entry name" value="PROTEIN_KINASE_DOM"/>
    <property type="match status" value="1"/>
</dbReference>
<gene>
    <name evidence="2" type="primary">PLK4</name>
    <name type="synonym">SAK</name>
</gene>
<proteinExistence type="evidence at transcript level"/>
<reference key="1">
    <citation type="submission" date="2007-02" db="EMBL/GenBank/DDBJ databases">
        <authorList>
            <consortium name="NIH - Mammalian Gene Collection (MGC) project"/>
        </authorList>
    </citation>
    <scope>NUCLEOTIDE SEQUENCE [LARGE SCALE MRNA]</scope>
    <source>
        <strain>Hereford</strain>
        <tissue>Thymus</tissue>
    </source>
</reference>
<feature type="chain" id="PRO_0000385279" description="Serine/threonine-protein kinase PLK4">
    <location>
        <begin position="1"/>
        <end position="893"/>
    </location>
</feature>
<feature type="domain" description="Protein kinase" evidence="5">
    <location>
        <begin position="12"/>
        <end position="265"/>
    </location>
</feature>
<feature type="domain" description="Cryptic POLO box 1 (CPB1)" evidence="6">
    <location>
        <begin position="509"/>
        <end position="622"/>
    </location>
</feature>
<feature type="domain" description="Cryptic POLO box 2 (CPB2)" evidence="7">
    <location>
        <begin position="623"/>
        <end position="736"/>
    </location>
</feature>
<feature type="domain" description="POLO box" evidence="4">
    <location>
        <begin position="809"/>
        <end position="887"/>
    </location>
</feature>
<feature type="region of interest" description="Disordered" evidence="8">
    <location>
        <begin position="349"/>
        <end position="393"/>
    </location>
</feature>
<feature type="region of interest" description="Disordered" evidence="8">
    <location>
        <begin position="730"/>
        <end position="749"/>
    </location>
</feature>
<feature type="compositionally biased region" description="Polar residues" evidence="8">
    <location>
        <begin position="349"/>
        <end position="358"/>
    </location>
</feature>
<feature type="compositionally biased region" description="Basic and acidic residues" evidence="8">
    <location>
        <begin position="362"/>
        <end position="371"/>
    </location>
</feature>
<feature type="active site" description="Proton acceptor" evidence="5">
    <location>
        <position position="136"/>
    </location>
</feature>
<feature type="binding site" evidence="5">
    <location>
        <begin position="18"/>
        <end position="26"/>
    </location>
    <ligand>
        <name>ATP</name>
        <dbReference type="ChEBI" id="CHEBI:30616"/>
    </ligand>
</feature>
<feature type="binding site" evidence="5">
    <location>
        <position position="41"/>
    </location>
    <ligand>
        <name>ATP</name>
        <dbReference type="ChEBI" id="CHEBI:30616"/>
    </ligand>
</feature>
<feature type="modified residue" description="N6-acetyllysine" evidence="2">
    <location>
        <position position="45"/>
    </location>
</feature>
<feature type="modified residue" description="N6-acetyllysine" evidence="2">
    <location>
        <position position="46"/>
    </location>
</feature>
<feature type="modified residue" description="Phosphoserine" evidence="2">
    <location>
        <position position="403"/>
    </location>
</feature>
<feature type="modified residue" description="Phosphoserine" evidence="2">
    <location>
        <position position="588"/>
    </location>
</feature>
<organism>
    <name type="scientific">Bos taurus</name>
    <name type="common">Bovine</name>
    <dbReference type="NCBI Taxonomy" id="9913"/>
    <lineage>
        <taxon>Eukaryota</taxon>
        <taxon>Metazoa</taxon>
        <taxon>Chordata</taxon>
        <taxon>Craniata</taxon>
        <taxon>Vertebrata</taxon>
        <taxon>Euteleostomi</taxon>
        <taxon>Mammalia</taxon>
        <taxon>Eutheria</taxon>
        <taxon>Laurasiatheria</taxon>
        <taxon>Artiodactyla</taxon>
        <taxon>Ruminantia</taxon>
        <taxon>Pecora</taxon>
        <taxon>Bovidae</taxon>
        <taxon>Bovinae</taxon>
        <taxon>Bos</taxon>
    </lineage>
</organism>
<sequence>MATCIGEKIEDFRVGNLLGKGSFAGVYRAESIHTGLEVAIKMIDKKAMYKAGMVQRVQNEVKIHCQLKHPSILELYNYFEDNNYVYLVLEMCHNGEMNRYLKNRRKPFSENEARHFMHQIITGMLYLHSHGILHRDLTLSNLLLTRNMNIKIADFGLAAQLKMPHEKHYTLCGTPNYISPEIATRSAHGLESDIWSLGCMFYTLLIGRPPFDTDTVKNTLNKVVLADYEMPTFLSREAKDLIHQLLRRNPADRLSLSSVLDHPFMSRNSSKKSKDLGTVEDSIDSGHATISTAITASSSTSISGSLFDRRRLLIEQPLPNKMTIFPKNKNPSDFSSSGDGISFYTSWGNQEQETSNSGRGRVIQEAEERPHSRYLRRAHSSDRSETSHGQSRVKTYTMERCYSAEMLSKSKRSGVEENERYSPTNNDANIFHFFKEKTSNSSGSFEGPDNNQALSNHLCPGKTPFPFPEQTPQTEMVQQWFGNLQINDPSCEQSKTRGVEPPLVYQKRTLRSITSPLTAYRLKPIRQKTKKAVVSILDSEEVCVELLKDYASQEYVKEVLQISSDGSMITIYYPNDGRGFLLADRPPSPTDNISRYSFDNLPEKYWRKYQYASRFVQLVRSKSPKITYFTRYAKCVLMENSPGADFEVWFYDGAKIHKTEDLIQVIEKTGRSYTLKGESEVNSLKEEVKMYMNHANEGHRICLALESIISEEEKKSGSAPFFPIIVGRRPSSTSSPKALTPPPPVDPNYPMRETPSLNRMIINSAASPKQAPVLNPPVVTNEGLGLMGAASETNSSPRSLKDCLPKSAQLLKSVFVKNVGWATQLTSGAVWVQFNDGSQLVVQAGVSSISYTSPDGQTTRYGENEKLPEYIKQKLQCLSSILLMFSNPTPSFH</sequence>
<protein>
    <recommendedName>
        <fullName evidence="2">Serine/threonine-protein kinase PLK4</fullName>
        <ecNumber evidence="2">2.7.11.21</ecNumber>
    </recommendedName>
    <alternativeName>
        <fullName>Polo-like kinase 4</fullName>
        <shortName>PLK-4</shortName>
    </alternativeName>
    <alternativeName>
        <fullName>Serine/threonine-protein kinase Sak</fullName>
    </alternativeName>
</protein>
<keyword id="KW-0007">Acetylation</keyword>
<keyword id="KW-0067">ATP-binding</keyword>
<keyword id="KW-0963">Cytoplasm</keyword>
<keyword id="KW-0206">Cytoskeleton</keyword>
<keyword id="KW-0418">Kinase</keyword>
<keyword id="KW-0547">Nucleotide-binding</keyword>
<keyword id="KW-0539">Nucleus</keyword>
<keyword id="KW-0597">Phosphoprotein</keyword>
<keyword id="KW-1185">Reference proteome</keyword>
<keyword id="KW-0723">Serine/threonine-protein kinase</keyword>
<keyword id="KW-0808">Transferase</keyword>
<keyword id="KW-0832">Ubl conjugation</keyword>
<evidence type="ECO:0000250" key="1"/>
<evidence type="ECO:0000250" key="2">
    <source>
        <dbReference type="UniProtKB" id="O00444"/>
    </source>
</evidence>
<evidence type="ECO:0000250" key="3">
    <source>
        <dbReference type="UniProtKB" id="Q64702"/>
    </source>
</evidence>
<evidence type="ECO:0000255" key="4">
    <source>
        <dbReference type="PROSITE-ProRule" id="PRU00154"/>
    </source>
</evidence>
<evidence type="ECO:0000255" key="5">
    <source>
        <dbReference type="PROSITE-ProRule" id="PRU00159"/>
    </source>
</evidence>
<evidence type="ECO:0000255" key="6">
    <source>
        <dbReference type="PROSITE-ProRule" id="PRU01328"/>
    </source>
</evidence>
<evidence type="ECO:0000255" key="7">
    <source>
        <dbReference type="PROSITE-ProRule" id="PRU01329"/>
    </source>
</evidence>
<evidence type="ECO:0000256" key="8">
    <source>
        <dbReference type="SAM" id="MobiDB-lite"/>
    </source>
</evidence>